<organismHost>
    <name type="scientific">Acanthamoeba polyphaga</name>
    <name type="common">Amoeba</name>
    <dbReference type="NCBI Taxonomy" id="5757"/>
</organismHost>
<accession>Q5UQE6</accession>
<sequence>MSKTSKSNKNPKSIEEKYQKKNLHEHILHSPDTYIGSIEEKTCNMWIFNESAGEDDAKIIFKEITYVPGLYKIYDEVIVNAADHNKRCQTCNIIKVDIDQKTGQISVWNNGDGIDVAIHKEHNIWVPSMIFGELLTSTNYDKNEEKTVGGKNGFGAKLANIYSVEFTIETVDANKGKKFFQRFTNNMYDKEEPKISSFKKSSYTKITFIPDFKKFGLKCLDDDTLALFKKRVFDLAMTTNAKVYFNDKQIVQNNFKKYVGLYFPEGSQHKVVIDDTTHERWKVGVIYDPTDQLEHQNISFVNSICTSRGGTHVEQVVGQIVNGLKTAIVKKAKNVQIKPAMIKENLIFFVDATIVNPDFDTQTKEYLTKKAANFGSKFEVTEKFIKGVIKTGVCDQIIANAKAREEANLSKTDGKGRGPVRYEKLYNAHKAGTKEGYKCTLILTEGDSAKTFAMSGLNVIGRDYYGVFPLRGKLLNVRDASPKKIADNEEITAIKKIVGLEQGKVYDDLKGLRYGSIMILADQDVDGYHIKGLIMNFIHCFWPSLVKYEGFIQSFATPLLKATKGKGKTKQVVAFTSPQSFEEWKKENNDGKGWSIKYYKGLGTSDPAEAQECFADLNDKLVKYFWEPKKKNLESESNSKSVDSNKSKTTNKKKIESEFIEEESDIISDTYKPKNKDISEDAMTLAFAGGREDDRKIWINTYNPDNYLDPSKKRISYYDFIHKELITFSVDDVLRSVPNLMDGFKPSHRKVFYGSVEKNIYKQEIKVSDLTGFVSNMTKYHHGDQSLSSTIVGMAQNYVGSNNLNLLMPLGMFGSRLTGGKDSASPRYLNTKLDDLAKKIFIDYDFDILQHQSEDNCRIEPVYYAPIIPMILVNGAEGIGTGYSTKIYPCNPRDIIANIKRLLTNENPKTMKPWFRHLTGTIEKIDGAKYISRAKYEIIGKDTIHITDLPVGIWTDNYKAFLDNLIVQGTAQNAEEKKASKAVSSAKNTKTTTKAGSKTGSRTRKNPALAKKSQKSVTAKVAKKNPVASSIKTYSEDCTDIRISFTIVFHPGKLDTLIKSGKLDTGLKLVKPLNLTNMHLFNEKGKIKKYDTYGAILRNFVKVRLNLYQKRKDYLLGKWKKEMDILKWKVKFIEYVIEGKIVIFKNGKSKKKEEVLKALEDLKFPKFIVGNESYPSYGYITSIGLFNLTLEEVEKLKKQLADKKQELAILEAKSPEEIWEEELDEFVEAYDIWEKEVDENYNDLLNKKKGSTGKKSRKTSTQK</sequence>
<feature type="chain" id="PRO_0000145390" description="DNA topoisomerase 2">
    <location>
        <begin position="1"/>
        <end position="1263"/>
    </location>
</feature>
<feature type="domain" description="Toprim" evidence="3">
    <location>
        <begin position="439"/>
        <end position="553"/>
    </location>
</feature>
<feature type="domain" description="Topo IIA-type catalytic" evidence="4">
    <location>
        <begin position="737"/>
        <end position="1223"/>
    </location>
</feature>
<feature type="region of interest" description="Interaction with DNA" evidence="2">
    <location>
        <begin position="329"/>
        <end position="331"/>
    </location>
</feature>
<feature type="region of interest" description="Disordered" evidence="5">
    <location>
        <begin position="977"/>
        <end position="1015"/>
    </location>
</feature>
<feature type="region of interest" description="Interaction with DNA" evidence="2">
    <location>
        <begin position="1068"/>
        <end position="1077"/>
    </location>
</feature>
<feature type="region of interest" description="Disordered" evidence="5">
    <location>
        <begin position="1244"/>
        <end position="1263"/>
    </location>
</feature>
<feature type="compositionally biased region" description="Low complexity" evidence="5">
    <location>
        <begin position="981"/>
        <end position="1000"/>
    </location>
</feature>
<feature type="compositionally biased region" description="Basic residues" evidence="5">
    <location>
        <begin position="1247"/>
        <end position="1263"/>
    </location>
</feature>
<feature type="active site" description="O-(5'-phospho-DNA)-tyrosine intermediate" evidence="4">
    <location>
        <position position="828"/>
    </location>
</feature>
<feature type="binding site" evidence="2">
    <location>
        <position position="80"/>
    </location>
    <ligand>
        <name>ATP</name>
        <dbReference type="ChEBI" id="CHEBI:30616"/>
    </ligand>
</feature>
<feature type="binding site" evidence="2">
    <location>
        <position position="109"/>
    </location>
    <ligand>
        <name>ATP</name>
        <dbReference type="ChEBI" id="CHEBI:30616"/>
    </ligand>
</feature>
<feature type="binding site" evidence="2">
    <location>
        <begin position="137"/>
        <end position="139"/>
    </location>
    <ligand>
        <name>ATP</name>
        <dbReference type="ChEBI" id="CHEBI:30616"/>
    </ligand>
</feature>
<feature type="binding site" evidence="2">
    <location>
        <begin position="150"/>
        <end position="157"/>
    </location>
    <ligand>
        <name>ATP</name>
        <dbReference type="ChEBI" id="CHEBI:30616"/>
    </ligand>
</feature>
<feature type="binding site" evidence="2">
    <location>
        <begin position="362"/>
        <end position="364"/>
    </location>
    <ligand>
        <name>ATP</name>
        <dbReference type="ChEBI" id="CHEBI:30616"/>
    </ligand>
</feature>
<feature type="binding site" evidence="3">
    <location>
        <position position="445"/>
    </location>
    <ligand>
        <name>Mg(2+)</name>
        <dbReference type="ChEBI" id="CHEBI:18420"/>
        <label>1</label>
        <note>catalytic</note>
    </ligand>
</feature>
<feature type="binding site" evidence="3">
    <location>
        <position position="522"/>
    </location>
    <ligand>
        <name>Mg(2+)</name>
        <dbReference type="ChEBI" id="CHEBI:18420"/>
        <label>1</label>
        <note>catalytic</note>
    </ligand>
</feature>
<feature type="binding site" evidence="3">
    <location>
        <position position="522"/>
    </location>
    <ligand>
        <name>Mg(2+)</name>
        <dbReference type="ChEBI" id="CHEBI:18420"/>
        <label>2</label>
    </ligand>
</feature>
<feature type="binding site" evidence="3">
    <location>
        <position position="524"/>
    </location>
    <ligand>
        <name>Mg(2+)</name>
        <dbReference type="ChEBI" id="CHEBI:18420"/>
        <label>2</label>
    </ligand>
</feature>
<feature type="site" description="Interaction with DNA" evidence="3">
    <location>
        <position position="473"/>
    </location>
</feature>
<feature type="site" description="Interaction with DNA" evidence="2">
    <location>
        <position position="476"/>
    </location>
</feature>
<feature type="site" description="Interaction with DNA" evidence="2">
    <location>
        <position position="695"/>
    </location>
</feature>
<feature type="site" description="Interaction with DNA" evidence="2">
    <location>
        <position position="696"/>
    </location>
</feature>
<feature type="site" description="Interaction with DNA" evidence="2">
    <location>
        <position position="745"/>
    </location>
</feature>
<feature type="site" description="Interaction with DNA" evidence="2">
    <location>
        <position position="780"/>
    </location>
</feature>
<feature type="site" description="Interaction with DNA" evidence="2">
    <location>
        <position position="786"/>
    </location>
</feature>
<feature type="site" description="Transition state stabilizer" evidence="1">
    <location>
        <position position="827"/>
    </location>
</feature>
<feature type="site" description="Interaction with DNA" evidence="2">
    <location>
        <position position="954"/>
    </location>
</feature>
<protein>
    <recommendedName>
        <fullName>DNA topoisomerase 2</fullName>
        <ecNumber evidence="3">5.6.2.2</ecNumber>
    </recommendedName>
    <alternativeName>
        <fullName>DNA topoisomerase II</fullName>
    </alternativeName>
</protein>
<evidence type="ECO:0000250" key="1"/>
<evidence type="ECO:0000250" key="2">
    <source>
        <dbReference type="UniProtKB" id="P11388"/>
    </source>
</evidence>
<evidence type="ECO:0000255" key="3">
    <source>
        <dbReference type="PROSITE-ProRule" id="PRU00995"/>
    </source>
</evidence>
<evidence type="ECO:0000255" key="4">
    <source>
        <dbReference type="PROSITE-ProRule" id="PRU01384"/>
    </source>
</evidence>
<evidence type="ECO:0000256" key="5">
    <source>
        <dbReference type="SAM" id="MobiDB-lite"/>
    </source>
</evidence>
<evidence type="ECO:0000305" key="6"/>
<name>TOP2_MIMIV</name>
<dbReference type="EC" id="5.6.2.2" evidence="3"/>
<dbReference type="EMBL" id="AY653733">
    <property type="protein sequence ID" value="AAV50746.1"/>
    <property type="molecule type" value="Genomic_DNA"/>
</dbReference>
<dbReference type="SMR" id="Q5UQE6"/>
<dbReference type="KEGG" id="vg:9925106"/>
<dbReference type="Proteomes" id="UP000001134">
    <property type="component" value="Genome"/>
</dbReference>
<dbReference type="GO" id="GO:0005524">
    <property type="term" value="F:ATP binding"/>
    <property type="evidence" value="ECO:0007669"/>
    <property type="project" value="UniProtKB-KW"/>
</dbReference>
<dbReference type="GO" id="GO:0003677">
    <property type="term" value="F:DNA binding"/>
    <property type="evidence" value="ECO:0007669"/>
    <property type="project" value="UniProtKB-KW"/>
</dbReference>
<dbReference type="GO" id="GO:0003918">
    <property type="term" value="F:DNA topoisomerase type II (double strand cut, ATP-hydrolyzing) activity"/>
    <property type="evidence" value="ECO:0007669"/>
    <property type="project" value="UniProtKB-EC"/>
</dbReference>
<dbReference type="GO" id="GO:0046872">
    <property type="term" value="F:metal ion binding"/>
    <property type="evidence" value="ECO:0007669"/>
    <property type="project" value="UniProtKB-KW"/>
</dbReference>
<dbReference type="GO" id="GO:0006265">
    <property type="term" value="P:DNA topological change"/>
    <property type="evidence" value="ECO:0007669"/>
    <property type="project" value="InterPro"/>
</dbReference>
<dbReference type="GO" id="GO:0000819">
    <property type="term" value="P:sister chromatid segregation"/>
    <property type="evidence" value="ECO:0007669"/>
    <property type="project" value="TreeGrafter"/>
</dbReference>
<dbReference type="CDD" id="cd03365">
    <property type="entry name" value="TOPRIM_TopoIIA"/>
    <property type="match status" value="1"/>
</dbReference>
<dbReference type="FunFam" id="3.30.565.10:FF:000004">
    <property type="entry name" value="DNA topoisomerase 2"/>
    <property type="match status" value="1"/>
</dbReference>
<dbReference type="FunFam" id="3.40.50.670:FF:000001">
    <property type="entry name" value="DNA topoisomerase 2"/>
    <property type="match status" value="1"/>
</dbReference>
<dbReference type="FunFam" id="3.90.199.10:FF:000002">
    <property type="entry name" value="DNA topoisomerase 2"/>
    <property type="match status" value="1"/>
</dbReference>
<dbReference type="Gene3D" id="3.30.1360.40">
    <property type="match status" value="1"/>
</dbReference>
<dbReference type="Gene3D" id="3.30.1490.30">
    <property type="match status" value="1"/>
</dbReference>
<dbReference type="Gene3D" id="3.30.230.10">
    <property type="match status" value="1"/>
</dbReference>
<dbReference type="Gene3D" id="3.40.50.670">
    <property type="match status" value="2"/>
</dbReference>
<dbReference type="Gene3D" id="3.30.565.10">
    <property type="entry name" value="Histidine kinase-like ATPase, C-terminal domain"/>
    <property type="match status" value="1"/>
</dbReference>
<dbReference type="Gene3D" id="3.90.199.10">
    <property type="entry name" value="Topoisomerase II, domain 5"/>
    <property type="match status" value="1"/>
</dbReference>
<dbReference type="Gene3D" id="1.10.268.10">
    <property type="entry name" value="Topoisomerase, domain 3"/>
    <property type="match status" value="1"/>
</dbReference>
<dbReference type="InterPro" id="IPR050634">
    <property type="entry name" value="DNA_Topoisomerase_II"/>
</dbReference>
<dbReference type="InterPro" id="IPR036890">
    <property type="entry name" value="HATPase_C_sf"/>
</dbReference>
<dbReference type="InterPro" id="IPR020568">
    <property type="entry name" value="Ribosomal_Su5_D2-typ_SF"/>
</dbReference>
<dbReference type="InterPro" id="IPR014721">
    <property type="entry name" value="Ribsml_uS5_D2-typ_fold_subgr"/>
</dbReference>
<dbReference type="InterPro" id="IPR001241">
    <property type="entry name" value="Topo_IIA"/>
</dbReference>
<dbReference type="InterPro" id="IPR013760">
    <property type="entry name" value="Topo_IIA-like_dom_sf"/>
</dbReference>
<dbReference type="InterPro" id="IPR013758">
    <property type="entry name" value="Topo_IIA_A/C_ab"/>
</dbReference>
<dbReference type="InterPro" id="IPR013757">
    <property type="entry name" value="Topo_IIA_A_a_sf"/>
</dbReference>
<dbReference type="InterPro" id="IPR013759">
    <property type="entry name" value="Topo_IIA_B_C"/>
</dbReference>
<dbReference type="InterPro" id="IPR013506">
    <property type="entry name" value="Topo_IIA_bsu_dom2"/>
</dbReference>
<dbReference type="InterPro" id="IPR002205">
    <property type="entry name" value="Topo_IIA_dom_A"/>
</dbReference>
<dbReference type="InterPro" id="IPR001154">
    <property type="entry name" value="TopoII_euk"/>
</dbReference>
<dbReference type="InterPro" id="IPR018522">
    <property type="entry name" value="TopoIIA_CS"/>
</dbReference>
<dbReference type="InterPro" id="IPR031660">
    <property type="entry name" value="TOPRIM_C"/>
</dbReference>
<dbReference type="InterPro" id="IPR006171">
    <property type="entry name" value="TOPRIM_dom"/>
</dbReference>
<dbReference type="InterPro" id="IPR034157">
    <property type="entry name" value="TOPRIM_TopoII"/>
</dbReference>
<dbReference type="PANTHER" id="PTHR10169:SF38">
    <property type="entry name" value="DNA TOPOISOMERASE 2"/>
    <property type="match status" value="1"/>
</dbReference>
<dbReference type="PANTHER" id="PTHR10169">
    <property type="entry name" value="DNA TOPOISOMERASE/GYRASE"/>
    <property type="match status" value="1"/>
</dbReference>
<dbReference type="Pfam" id="PF00204">
    <property type="entry name" value="DNA_gyraseB"/>
    <property type="match status" value="1"/>
</dbReference>
<dbReference type="Pfam" id="PF00521">
    <property type="entry name" value="DNA_topoisoIV"/>
    <property type="match status" value="2"/>
</dbReference>
<dbReference type="Pfam" id="PF02518">
    <property type="entry name" value="HATPase_c"/>
    <property type="match status" value="1"/>
</dbReference>
<dbReference type="Pfam" id="PF01751">
    <property type="entry name" value="Toprim"/>
    <property type="match status" value="1"/>
</dbReference>
<dbReference type="Pfam" id="PF16898">
    <property type="entry name" value="TOPRIM_C"/>
    <property type="match status" value="2"/>
</dbReference>
<dbReference type="PRINTS" id="PR01158">
    <property type="entry name" value="TOPISMRASEII"/>
</dbReference>
<dbReference type="PRINTS" id="PR00418">
    <property type="entry name" value="TPI2FAMILY"/>
</dbReference>
<dbReference type="SMART" id="SM00433">
    <property type="entry name" value="TOP2c"/>
    <property type="match status" value="1"/>
</dbReference>
<dbReference type="SMART" id="SM00434">
    <property type="entry name" value="TOP4c"/>
    <property type="match status" value="1"/>
</dbReference>
<dbReference type="SUPFAM" id="SSF55874">
    <property type="entry name" value="ATPase domain of HSP90 chaperone/DNA topoisomerase II/histidine kinase"/>
    <property type="match status" value="1"/>
</dbReference>
<dbReference type="SUPFAM" id="SSF54211">
    <property type="entry name" value="Ribosomal protein S5 domain 2-like"/>
    <property type="match status" value="1"/>
</dbReference>
<dbReference type="SUPFAM" id="SSF56719">
    <property type="entry name" value="Type II DNA topoisomerase"/>
    <property type="match status" value="2"/>
</dbReference>
<dbReference type="PROSITE" id="PS52040">
    <property type="entry name" value="TOPO_IIA"/>
    <property type="match status" value="1"/>
</dbReference>
<dbReference type="PROSITE" id="PS00177">
    <property type="entry name" value="TOPOISOMERASE_II"/>
    <property type="match status" value="1"/>
</dbReference>
<dbReference type="PROSITE" id="PS50880">
    <property type="entry name" value="TOPRIM"/>
    <property type="match status" value="1"/>
</dbReference>
<gene>
    <name type="primary">TOP2</name>
    <name type="ordered locus">MIMI_R480</name>
</gene>
<organism>
    <name type="scientific">Acanthamoeba polyphaga mimivirus</name>
    <name type="common">APMV</name>
    <dbReference type="NCBI Taxonomy" id="212035"/>
    <lineage>
        <taxon>Viruses</taxon>
        <taxon>Varidnaviria</taxon>
        <taxon>Bamfordvirae</taxon>
        <taxon>Nucleocytoviricota</taxon>
        <taxon>Megaviricetes</taxon>
        <taxon>Imitervirales</taxon>
        <taxon>Mimiviridae</taxon>
        <taxon>Megamimivirinae</taxon>
        <taxon>Mimivirus</taxon>
        <taxon>Mimivirus bradfordmassiliense</taxon>
    </lineage>
</organism>
<proteinExistence type="inferred from homology"/>
<comment type="function">
    <text>Can introduce negative superhelical turns into double-stranded circular DNA.</text>
</comment>
<comment type="catalytic activity">
    <reaction evidence="3">
        <text>ATP-dependent breakage, passage and rejoining of double-stranded DNA.</text>
        <dbReference type="EC" id="5.6.2.2"/>
    </reaction>
</comment>
<comment type="cofactor">
    <cofactor evidence="3">
        <name>Mg(2+)</name>
        <dbReference type="ChEBI" id="CHEBI:18420"/>
    </cofactor>
    <cofactor evidence="3">
        <name>Mn(2+)</name>
        <dbReference type="ChEBI" id="CHEBI:29035"/>
    </cofactor>
    <cofactor evidence="3">
        <name>Ca(2+)</name>
        <dbReference type="ChEBI" id="CHEBI:29108"/>
    </cofactor>
    <text evidence="3">Binds two Mg(2+) per subunit. The magnesium ions form salt bridges with both the protein and the DNA. Can also accept other divalent metal cations, such as Mn(2+) or Ca(2+).</text>
</comment>
<comment type="similarity">
    <text evidence="6">Belongs to the type II topoisomerase family.</text>
</comment>
<reference key="1">
    <citation type="journal article" date="2004" name="Science">
        <title>The 1.2-megabase genome sequence of Mimivirus.</title>
        <authorList>
            <person name="Raoult D."/>
            <person name="Audic S."/>
            <person name="Robert C."/>
            <person name="Abergel C."/>
            <person name="Renesto P."/>
            <person name="Ogata H."/>
            <person name="La Scola B."/>
            <person name="Susan M."/>
            <person name="Claverie J.-M."/>
        </authorList>
    </citation>
    <scope>NUCLEOTIDE SEQUENCE [LARGE SCALE GENOMIC DNA]</scope>
    <source>
        <strain>Rowbotham-Bradford</strain>
    </source>
</reference>
<keyword id="KW-0067">ATP-binding</keyword>
<keyword id="KW-0238">DNA-binding</keyword>
<keyword id="KW-0413">Isomerase</keyword>
<keyword id="KW-0460">Magnesium</keyword>
<keyword id="KW-0479">Metal-binding</keyword>
<keyword id="KW-0547">Nucleotide-binding</keyword>
<keyword id="KW-1185">Reference proteome</keyword>
<keyword id="KW-0799">Topoisomerase</keyword>